<organism>
    <name type="scientific">Haliangium ochraceum (strain DSM 14365 / JCM 11303 / SMP-2)</name>
    <dbReference type="NCBI Taxonomy" id="502025"/>
    <lineage>
        <taxon>Bacteria</taxon>
        <taxon>Pseudomonadati</taxon>
        <taxon>Myxococcota</taxon>
        <taxon>Polyangia</taxon>
        <taxon>Haliangiales</taxon>
        <taxon>Kofleriaceae</taxon>
        <taxon>Haliangium</taxon>
    </lineage>
</organism>
<proteinExistence type="evidence at protein level"/>
<name>FER_HALO1</name>
<gene>
    <name evidence="6" type="primary">fer</name>
    <name evidence="9" type="ordered locus">Hoch_3836</name>
</gene>
<comment type="function">
    <text evidence="1 3 4">Cargo protein of a type 1 encapsulin nanocompartment. A ferritin-like ferroxidase that converts Fe(2+) to Fe(3+) iron inside the encapsulin nanocompartment (PubMed:30837306, PubMed:35080974). Mineralized Fe(3+) is released to the exterior of the decameric complex for deposition in the encapsulin nanocompartment. In solution the decamer binds 10-15 iron cations; in the encapsulin nanocompartment the decamer can bind up to 48 ions, perhaps via its internal channel, and on its exterior. The cargo-loaded nanocompartment maximally sequesters up to 4150 Fe ions (By similarity).</text>
</comment>
<comment type="catalytic activity">
    <reaction evidence="3 4">
        <text>4 Fe(2+) + O2 + 4 H(+) = 4 Fe(3+) + 2 H2O</text>
        <dbReference type="Rhea" id="RHEA:11148"/>
        <dbReference type="ChEBI" id="CHEBI:15377"/>
        <dbReference type="ChEBI" id="CHEBI:15378"/>
        <dbReference type="ChEBI" id="CHEBI:15379"/>
        <dbReference type="ChEBI" id="CHEBI:29033"/>
        <dbReference type="ChEBI" id="CHEBI:29034"/>
        <dbReference type="EC" id="1.16.3.1"/>
    </reaction>
    <physiologicalReaction direction="left-to-right" evidence="3 4">
        <dbReference type="Rhea" id="RHEA:11149"/>
    </physiologicalReaction>
</comment>
<comment type="activity regulation">
    <text evidence="3">The ferroxidase activity is inhibited by zinc.</text>
</comment>
<comment type="subunit">
    <text evidence="3 4">Forms dimers at all pH tested; under acidic conditions formes decamers. The N-terminal domain (residues 1-97) crystallizes as a decameric ring (PubMed:30837306). Four decamers are loaded in the encapsulin nanocompartment in a tetrahedral arrangement. A 3 nm gap is consistently seen between the shell and the cargo. The target peptide extends away from the decameric ring, to allow binding to the interior of the encapsulin nanocompartment shell (PubMed:35080974).</text>
</comment>
<comment type="subcellular location">
    <subcellularLocation>
        <location evidence="4">Encapsulin nanocompartment</location>
    </subcellularLocation>
</comment>
<comment type="domain">
    <text evidence="3">The decamer has negatively charged patches on its exterior, and a negatively charged tunnel at the center, the charges are probably metal-binding sites.</text>
</comment>
<comment type="similarity">
    <text evidence="6">Belongs to the ferritin-like superfamily. EncFtn family.</text>
</comment>
<keyword id="KW-0002">3D-structure</keyword>
<keyword id="KW-1284">Encapsulin nanocompartment</keyword>
<keyword id="KW-0406">Ion transport</keyword>
<keyword id="KW-0408">Iron</keyword>
<keyword id="KW-0409">Iron storage</keyword>
<keyword id="KW-0410">Iron transport</keyword>
<keyword id="KW-0479">Metal-binding</keyword>
<keyword id="KW-0560">Oxidoreductase</keyword>
<keyword id="KW-1185">Reference proteome</keyword>
<keyword id="KW-0813">Transport</keyword>
<reference evidence="9" key="1">
    <citation type="journal article" date="2010" name="Stand. Genomic Sci.">
        <title>Complete genome sequence of Haliangium ochraceum type strain (SMP-2).</title>
        <authorList>
            <person name="Ivanova N."/>
            <person name="Daum C."/>
            <person name="Lang E."/>
            <person name="Abt B."/>
            <person name="Kopitz M."/>
            <person name="Saunders E."/>
            <person name="Lapidus A."/>
            <person name="Lucas S."/>
            <person name="Glavina Del Rio T."/>
            <person name="Nolan M."/>
            <person name="Tice H."/>
            <person name="Copeland A."/>
            <person name="Cheng J.F."/>
            <person name="Chen F."/>
            <person name="Bruce D."/>
            <person name="Goodwin L."/>
            <person name="Pitluck S."/>
            <person name="Mavromatis K."/>
            <person name="Pati A."/>
            <person name="Mikhailova N."/>
            <person name="Chen A."/>
            <person name="Palaniappan K."/>
            <person name="Land M."/>
            <person name="Hauser L."/>
            <person name="Chang Y.J."/>
            <person name="Jeffries C.D."/>
            <person name="Detter J.C."/>
            <person name="Brettin T."/>
            <person name="Rohde M."/>
            <person name="Goker M."/>
            <person name="Bristow J."/>
            <person name="Markowitz V."/>
            <person name="Eisen J.A."/>
            <person name="Hugenholtz P."/>
            <person name="Kyrpides N.C."/>
            <person name="Klenk H.P."/>
        </authorList>
    </citation>
    <scope>NUCLEOTIDE SEQUENCE [LARGE SCALE GENOMIC DNA]</scope>
    <source>
        <strain>DSM 14365 / CIP 107738 / JCM 11303 / AJ 13395 / SMP-2</strain>
    </source>
</reference>
<reference evidence="10" key="2">
    <citation type="journal article" date="2019" name="Biochem. J.">
        <title>Conservation of the structural and functional architecture of encapsulated ferritins in bacteria and archaea.</title>
        <authorList>
            <person name="He D."/>
            <person name="Piergentili C."/>
            <person name="Ross J."/>
            <person name="Tarrant E."/>
            <person name="Tuck L.R."/>
            <person name="Mackay C.L."/>
            <person name="McIver Z."/>
            <person name="Waldron K.J."/>
            <person name="Clarke D.J."/>
            <person name="Marles-Wright J."/>
        </authorList>
    </citation>
    <scope>X-RAY CRYSTALLOGRAPHY (2.06 ANGSTROMS) OF 2-97</scope>
    <scope>FUNCTION</scope>
    <scope>CATALYTIC ACTIVITY</scope>
    <scope>ACTIVITY REGULATION</scope>
    <scope>SUBUNIT</scope>
    <scope>DOMAIN</scope>
    <source>
        <strain>DSM 14365 / CIP 107738 / JCM 11303 / AJ 13395 / SMP-2</strain>
    </source>
</reference>
<reference evidence="11 12" key="3">
    <citation type="journal article" date="2022" name="Sci. Adv.">
        <title>Pore dynamics and asymmetric cargo loading in an encapsulin nanocompartment.</title>
        <authorList>
            <person name="Ross J."/>
            <person name="McIver Z."/>
            <person name="Lambert T."/>
            <person name="Piergentili C."/>
            <person name="Bird J.E."/>
            <person name="Gallagher K.J."/>
            <person name="Cruickshank F.L."/>
            <person name="James P."/>
            <person name="Zarazua-Arvizu E."/>
            <person name="Horsfall L.E."/>
            <person name="Waldron K.J."/>
            <person name="Wilson M.D."/>
            <person name="Mackay C.L."/>
            <person name="Basle A."/>
            <person name="Clarke D.J."/>
            <person name="Marles-Wright J."/>
        </authorList>
    </citation>
    <scope>STRUCTURE BY ELECTRON MICROSCOPY (2.40 ANGSTROMS)</scope>
    <scope>FUNCTION</scope>
    <scope>CATALYTIC ACTIVITY</scope>
    <scope>SUBUNIT</scope>
    <scope>SUBCELLULAR LOCATION</scope>
    <source>
        <strain>DSM 14365 / CIP 107738 / JCM 11303 / AJ 13395 / SMP-2</strain>
    </source>
</reference>
<accession>D0LZ73</accession>
<protein>
    <recommendedName>
        <fullName evidence="5">Encapsulated ferritin-like protein</fullName>
        <shortName evidence="5">EncFtn</shortName>
        <ecNumber evidence="3 4">1.16.3.1</ecNumber>
    </recommendedName>
</protein>
<evidence type="ECO:0000250" key="1">
    <source>
        <dbReference type="UniProtKB" id="Q2RVS1"/>
    </source>
</evidence>
<evidence type="ECO:0000256" key="2">
    <source>
        <dbReference type="SAM" id="MobiDB-lite"/>
    </source>
</evidence>
<evidence type="ECO:0000269" key="3">
    <source>
    </source>
</evidence>
<evidence type="ECO:0000269" key="4">
    <source>
    </source>
</evidence>
<evidence type="ECO:0000303" key="5">
    <source>
    </source>
</evidence>
<evidence type="ECO:0000305" key="6"/>
<evidence type="ECO:0000305" key="7">
    <source>
    </source>
</evidence>
<evidence type="ECO:0000305" key="8">
    <source>
    </source>
</evidence>
<evidence type="ECO:0000312" key="9">
    <source>
        <dbReference type="EMBL" id="ACY16335.1"/>
    </source>
</evidence>
<evidence type="ECO:0007744" key="10">
    <source>
        <dbReference type="PDB" id="5N5F"/>
    </source>
</evidence>
<evidence type="ECO:0007744" key="11">
    <source>
        <dbReference type="PDB" id="7OE2"/>
    </source>
</evidence>
<evidence type="ECO:0007744" key="12">
    <source>
        <dbReference type="PDB" id="7OEU"/>
    </source>
</evidence>
<evidence type="ECO:0007829" key="13">
    <source>
        <dbReference type="PDB" id="5N5F"/>
    </source>
</evidence>
<sequence>MSSEQLHEPAELLSEETKNMHRALVTLIEELEAVDWYQQRADACSEPGLHDVLIHNKNEEVEHAMMTLEWIRRRSPVFDAHMRTYLFTERPILELEEEDTGSSSSVAASPTSAPSHGSLGIGSLRQEGKED</sequence>
<feature type="chain" id="PRO_0000458833" description="Encapsulated ferritin-like protein">
    <location>
        <begin position="1"/>
        <end position="131"/>
    </location>
</feature>
<feature type="region of interest" description="Disordered" evidence="2">
    <location>
        <begin position="96"/>
        <end position="131"/>
    </location>
</feature>
<feature type="region of interest" description="Targeting peptide" evidence="7 8">
    <location>
        <begin position="98"/>
        <end position="131"/>
    </location>
</feature>
<feature type="compositionally biased region" description="Low complexity" evidence="2">
    <location>
        <begin position="102"/>
        <end position="115"/>
    </location>
</feature>
<feature type="binding site" evidence="1">
    <location>
        <position position="30"/>
    </location>
    <ligand>
        <name>Fe cation</name>
        <dbReference type="ChEBI" id="CHEBI:24875"/>
        <label>1</label>
    </ligand>
</feature>
<feature type="binding site" evidence="1">
    <location>
        <position position="30"/>
    </location>
    <ligand>
        <name>Fe cation</name>
        <dbReference type="ChEBI" id="CHEBI:24875"/>
        <label>2</label>
    </ligand>
</feature>
<feature type="binding site" evidence="1">
    <location>
        <position position="60"/>
    </location>
    <ligand>
        <name>Fe cation</name>
        <dbReference type="ChEBI" id="CHEBI:24875"/>
        <label>1</label>
    </ligand>
</feature>
<feature type="binding site" evidence="1">
    <location>
        <position position="60"/>
    </location>
    <ligand>
        <name>Fe cation</name>
        <dbReference type="ChEBI" id="CHEBI:24875"/>
        <label>2</label>
    </ligand>
</feature>
<feature type="binding site" evidence="1">
    <location>
        <position position="63"/>
    </location>
    <ligand>
        <name>Fe cation</name>
        <dbReference type="ChEBI" id="CHEBI:24875"/>
        <label>1</label>
    </ligand>
</feature>
<feature type="binding site" evidence="1">
    <location>
        <position position="63"/>
    </location>
    <ligand>
        <name>Fe cation</name>
        <dbReference type="ChEBI" id="CHEBI:24875"/>
        <label>2</label>
    </ligand>
</feature>
<feature type="helix" evidence="13">
    <location>
        <begin position="10"/>
        <end position="12"/>
    </location>
</feature>
<feature type="helix" evidence="13">
    <location>
        <begin position="15"/>
        <end position="43"/>
    </location>
</feature>
<feature type="helix" evidence="13">
    <location>
        <begin position="47"/>
        <end position="74"/>
    </location>
</feature>
<feature type="helix" evidence="13">
    <location>
        <begin position="76"/>
        <end position="85"/>
    </location>
</feature>
<feature type="helix" evidence="13">
    <location>
        <begin position="92"/>
        <end position="94"/>
    </location>
</feature>
<dbReference type="EC" id="1.16.3.1" evidence="3 4"/>
<dbReference type="EMBL" id="CP001804">
    <property type="protein sequence ID" value="ACY16335.1"/>
    <property type="molecule type" value="Genomic_DNA"/>
</dbReference>
<dbReference type="RefSeq" id="WP_012828934.1">
    <property type="nucleotide sequence ID" value="NC_013440.1"/>
</dbReference>
<dbReference type="PDB" id="5N5F">
    <property type="method" value="X-ray"/>
    <property type="resolution" value="2.06 A"/>
    <property type="chains" value="A/B/C/D/E/F/G/H/I/J=2-97"/>
</dbReference>
<dbReference type="PDB" id="7OE2">
    <property type="method" value="EM"/>
    <property type="resolution" value="2.40 A"/>
    <property type="chains" value="1/2/3/4/5=1-131"/>
</dbReference>
<dbReference type="PDB" id="7OEU">
    <property type="method" value="EM"/>
    <property type="resolution" value="2.64 A"/>
    <property type="chains" value="1/2/3/4/5=1-131"/>
</dbReference>
<dbReference type="PDBsum" id="5N5F"/>
<dbReference type="PDBsum" id="7OE2"/>
<dbReference type="PDBsum" id="7OEU"/>
<dbReference type="EMDB" id="EMD-12859"/>
<dbReference type="EMDB" id="EMD-12864"/>
<dbReference type="SMR" id="D0LZ73"/>
<dbReference type="STRING" id="502025.Hoch_3836"/>
<dbReference type="TCDB" id="1.S.7.1.4">
    <property type="family name" value="the bacterial/archaeal nanocompartment encapsulin shell protein2 (banc-sp2) family"/>
</dbReference>
<dbReference type="KEGG" id="hoh:Hoch_3836"/>
<dbReference type="eggNOG" id="COG3461">
    <property type="taxonomic scope" value="Bacteria"/>
</dbReference>
<dbReference type="HOGENOM" id="CLU_161402_0_0_7"/>
<dbReference type="OrthoDB" id="9796238at2"/>
<dbReference type="Proteomes" id="UP000001880">
    <property type="component" value="Chromosome"/>
</dbReference>
<dbReference type="GO" id="GO:0140737">
    <property type="term" value="C:encapsulin nanocompartment"/>
    <property type="evidence" value="ECO:0007669"/>
    <property type="project" value="UniProtKB-SubCell"/>
</dbReference>
<dbReference type="GO" id="GO:0004322">
    <property type="term" value="F:ferroxidase activity"/>
    <property type="evidence" value="ECO:0007669"/>
    <property type="project" value="InterPro"/>
</dbReference>
<dbReference type="GO" id="GO:0046872">
    <property type="term" value="F:metal ion binding"/>
    <property type="evidence" value="ECO:0007669"/>
    <property type="project" value="UniProtKB-KW"/>
</dbReference>
<dbReference type="GO" id="GO:0006879">
    <property type="term" value="P:intracellular iron ion homeostasis"/>
    <property type="evidence" value="ECO:0007669"/>
    <property type="project" value="UniProtKB-KW"/>
</dbReference>
<dbReference type="GO" id="GO:0006826">
    <property type="term" value="P:iron ion transport"/>
    <property type="evidence" value="ECO:0007669"/>
    <property type="project" value="UniProtKB-KW"/>
</dbReference>
<dbReference type="Gene3D" id="6.10.140.1960">
    <property type="match status" value="1"/>
</dbReference>
<dbReference type="InterPro" id="IPR054581">
    <property type="entry name" value="EncFtn-like"/>
</dbReference>
<dbReference type="InterPro" id="IPR030907">
    <property type="entry name" value="Ferrit_encaps"/>
</dbReference>
<dbReference type="InterPro" id="IPR009078">
    <property type="entry name" value="Ferritin-like_SF"/>
</dbReference>
<dbReference type="NCBIfam" id="TIGR04535">
    <property type="entry name" value="ferrit_encaps"/>
    <property type="match status" value="1"/>
</dbReference>
<dbReference type="Pfam" id="PF22277">
    <property type="entry name" value="EncFtn-like"/>
    <property type="match status" value="1"/>
</dbReference>
<dbReference type="SUPFAM" id="SSF47240">
    <property type="entry name" value="Ferritin-like"/>
    <property type="match status" value="1"/>
</dbReference>